<dbReference type="EMBL" id="CP000253">
    <property type="protein sequence ID" value="ABD30343.1"/>
    <property type="molecule type" value="Genomic_DNA"/>
</dbReference>
<dbReference type="RefSeq" id="WP_000036631.1">
    <property type="nucleotide sequence ID" value="NZ_LS483365.1"/>
</dbReference>
<dbReference type="RefSeq" id="YP_499775.1">
    <property type="nucleotide sequence ID" value="NC_007795.1"/>
</dbReference>
<dbReference type="PDB" id="8BH7">
    <property type="method" value="EM"/>
    <property type="resolution" value="4.23 A"/>
    <property type="chains" value="A=2-155"/>
</dbReference>
<dbReference type="PDBsum" id="8BH7"/>
<dbReference type="EMDB" id="EMD-16049"/>
<dbReference type="SMR" id="Q2G2D3"/>
<dbReference type="STRING" id="93061.SAOUHSC_01242"/>
<dbReference type="PaxDb" id="1280-SAXN108_1269"/>
<dbReference type="GeneID" id="3920267"/>
<dbReference type="KEGG" id="sao:SAOUHSC_01242"/>
<dbReference type="PATRIC" id="fig|93061.5.peg.1136"/>
<dbReference type="eggNOG" id="COG0779">
    <property type="taxonomic scope" value="Bacteria"/>
</dbReference>
<dbReference type="HOGENOM" id="CLU_070525_2_0_9"/>
<dbReference type="OrthoDB" id="9805006at2"/>
<dbReference type="PRO" id="PR:Q2G2D3"/>
<dbReference type="Proteomes" id="UP000008816">
    <property type="component" value="Chromosome"/>
</dbReference>
<dbReference type="GO" id="GO:0005829">
    <property type="term" value="C:cytosol"/>
    <property type="evidence" value="ECO:0000318"/>
    <property type="project" value="GO_Central"/>
</dbReference>
<dbReference type="GO" id="GO:0000028">
    <property type="term" value="P:ribosomal small subunit assembly"/>
    <property type="evidence" value="ECO:0000318"/>
    <property type="project" value="GO_Central"/>
</dbReference>
<dbReference type="GO" id="GO:0006412">
    <property type="term" value="P:translation"/>
    <property type="evidence" value="ECO:0000318"/>
    <property type="project" value="GO_Central"/>
</dbReference>
<dbReference type="CDD" id="cd01734">
    <property type="entry name" value="YlxS_C"/>
    <property type="match status" value="1"/>
</dbReference>
<dbReference type="FunFam" id="3.30.300.70:FF:000001">
    <property type="entry name" value="Ribosome maturation factor RimP"/>
    <property type="match status" value="1"/>
</dbReference>
<dbReference type="Gene3D" id="2.30.30.180">
    <property type="entry name" value="Ribosome maturation factor RimP, C-terminal domain"/>
    <property type="match status" value="1"/>
</dbReference>
<dbReference type="Gene3D" id="3.30.300.70">
    <property type="entry name" value="RimP-like superfamily, N-terminal"/>
    <property type="match status" value="1"/>
</dbReference>
<dbReference type="HAMAP" id="MF_01077">
    <property type="entry name" value="RimP"/>
    <property type="match status" value="1"/>
</dbReference>
<dbReference type="InterPro" id="IPR003728">
    <property type="entry name" value="Ribosome_maturation_RimP"/>
</dbReference>
<dbReference type="InterPro" id="IPR028998">
    <property type="entry name" value="RimP_C"/>
</dbReference>
<dbReference type="InterPro" id="IPR036847">
    <property type="entry name" value="RimP_C_sf"/>
</dbReference>
<dbReference type="InterPro" id="IPR028989">
    <property type="entry name" value="RimP_N"/>
</dbReference>
<dbReference type="InterPro" id="IPR035956">
    <property type="entry name" value="RimP_N_sf"/>
</dbReference>
<dbReference type="NCBIfam" id="NF000928">
    <property type="entry name" value="PRK00092.1-2"/>
    <property type="match status" value="1"/>
</dbReference>
<dbReference type="PANTHER" id="PTHR33867">
    <property type="entry name" value="RIBOSOME MATURATION FACTOR RIMP"/>
    <property type="match status" value="1"/>
</dbReference>
<dbReference type="PANTHER" id="PTHR33867:SF1">
    <property type="entry name" value="RIBOSOME MATURATION FACTOR RIMP"/>
    <property type="match status" value="1"/>
</dbReference>
<dbReference type="Pfam" id="PF17384">
    <property type="entry name" value="DUF150_C"/>
    <property type="match status" value="1"/>
</dbReference>
<dbReference type="Pfam" id="PF02576">
    <property type="entry name" value="RimP_N"/>
    <property type="match status" value="1"/>
</dbReference>
<dbReference type="SUPFAM" id="SSF74942">
    <property type="entry name" value="YhbC-like, C-terminal domain"/>
    <property type="match status" value="1"/>
</dbReference>
<dbReference type="SUPFAM" id="SSF75420">
    <property type="entry name" value="YhbC-like, N-terminal domain"/>
    <property type="match status" value="1"/>
</dbReference>
<organism>
    <name type="scientific">Staphylococcus aureus (strain NCTC 8325 / PS 47)</name>
    <dbReference type="NCBI Taxonomy" id="93061"/>
    <lineage>
        <taxon>Bacteria</taxon>
        <taxon>Bacillati</taxon>
        <taxon>Bacillota</taxon>
        <taxon>Bacilli</taxon>
        <taxon>Bacillales</taxon>
        <taxon>Staphylococcaceae</taxon>
        <taxon>Staphylococcus</taxon>
    </lineage>
</organism>
<feature type="chain" id="PRO_1000064779" description="Ribosome maturation factor RimP">
    <location>
        <begin position="1"/>
        <end position="155"/>
    </location>
</feature>
<accession>Q2G2D3</accession>
<reference key="1">
    <citation type="book" date="2006" name="Gram positive pathogens, 2nd edition">
        <title>The Staphylococcus aureus NCTC 8325 genome.</title>
        <editorList>
            <person name="Fischetti V."/>
            <person name="Novick R."/>
            <person name="Ferretti J."/>
            <person name="Portnoy D."/>
            <person name="Rood J."/>
        </editorList>
        <authorList>
            <person name="Gillaspy A.F."/>
            <person name="Worrell V."/>
            <person name="Orvis J."/>
            <person name="Roe B.A."/>
            <person name="Dyer D.W."/>
            <person name="Iandolo J.J."/>
        </authorList>
    </citation>
    <scope>NUCLEOTIDE SEQUENCE [LARGE SCALE GENOMIC DNA]</scope>
    <source>
        <strain>NCTC 8325 / PS 47</strain>
    </source>
</reference>
<protein>
    <recommendedName>
        <fullName evidence="1">Ribosome maturation factor RimP</fullName>
    </recommendedName>
</protein>
<comment type="function">
    <text evidence="1">Required for maturation of 30S ribosomal subunits.</text>
</comment>
<comment type="subcellular location">
    <subcellularLocation>
        <location evidence="1">Cytoplasm</location>
    </subcellularLocation>
</comment>
<comment type="similarity">
    <text evidence="1">Belongs to the RimP family.</text>
</comment>
<proteinExistence type="evidence at protein level"/>
<evidence type="ECO:0000255" key="1">
    <source>
        <dbReference type="HAMAP-Rule" id="MF_01077"/>
    </source>
</evidence>
<sequence>MSKITEQVEVIVKPIMEDLNFELVDVEYVKEGRDHFLRISIDKEGGVDLNDCTLASEKISEAMDANDPIPEMYYLDVASPGAERPIKKEQDFQNAITKPVFVSLYVPIEGEKEWLGILQEVNNETIVVQVKIKARTKDIEIPRDKIAKARHAVMI</sequence>
<gene>
    <name evidence="1" type="primary">rimP</name>
    <name type="ordered locus">SAOUHSC_01242</name>
</gene>
<name>RIMP_STAA8</name>
<keyword id="KW-0002">3D-structure</keyword>
<keyword id="KW-0963">Cytoplasm</keyword>
<keyword id="KW-1185">Reference proteome</keyword>
<keyword id="KW-0690">Ribosome biogenesis</keyword>